<accession>A0QL49</accession>
<protein>
    <recommendedName>
        <fullName evidence="1">DNA-directed RNA polymerase subunit beta</fullName>
        <shortName evidence="1">RNAP subunit beta</shortName>
        <ecNumber evidence="1">2.7.7.6</ecNumber>
    </recommendedName>
    <alternativeName>
        <fullName evidence="1">RNA polymerase subunit beta</fullName>
    </alternativeName>
    <alternativeName>
        <fullName evidence="1">Transcriptase subunit beta</fullName>
    </alternativeName>
</protein>
<proteinExistence type="inferred from homology"/>
<keyword id="KW-0240">DNA-directed RNA polymerase</keyword>
<keyword id="KW-0548">Nucleotidyltransferase</keyword>
<keyword id="KW-0804">Transcription</keyword>
<keyword id="KW-0808">Transferase</keyword>
<gene>
    <name evidence="1" type="primary">rpoB</name>
    <name type="ordered locus">MAV_4503</name>
</gene>
<organism>
    <name type="scientific">Mycobacterium avium (strain 104)</name>
    <dbReference type="NCBI Taxonomy" id="243243"/>
    <lineage>
        <taxon>Bacteria</taxon>
        <taxon>Bacillati</taxon>
        <taxon>Actinomycetota</taxon>
        <taxon>Actinomycetes</taxon>
        <taxon>Mycobacteriales</taxon>
        <taxon>Mycobacteriaceae</taxon>
        <taxon>Mycobacterium</taxon>
        <taxon>Mycobacterium avium complex (MAC)</taxon>
    </lineage>
</organism>
<comment type="function">
    <text evidence="1">DNA-dependent RNA polymerase catalyzes the transcription of DNA into RNA using the four ribonucleoside triphosphates as substrates.</text>
</comment>
<comment type="catalytic activity">
    <reaction evidence="1">
        <text>RNA(n) + a ribonucleoside 5'-triphosphate = RNA(n+1) + diphosphate</text>
        <dbReference type="Rhea" id="RHEA:21248"/>
        <dbReference type="Rhea" id="RHEA-COMP:14527"/>
        <dbReference type="Rhea" id="RHEA-COMP:17342"/>
        <dbReference type="ChEBI" id="CHEBI:33019"/>
        <dbReference type="ChEBI" id="CHEBI:61557"/>
        <dbReference type="ChEBI" id="CHEBI:140395"/>
        <dbReference type="EC" id="2.7.7.6"/>
    </reaction>
</comment>
<comment type="subunit">
    <text evidence="1">The RNAP catalytic core consists of 2 alpha, 1 beta, 1 beta' and 1 omega subunit. When a sigma factor is associated with the core the holoenzyme is formed, which can initiate transcription.</text>
</comment>
<comment type="similarity">
    <text evidence="1">Belongs to the RNA polymerase beta chain family.</text>
</comment>
<comment type="sequence caution" evidence="3">
    <conflict type="erroneous initiation">
        <sequence resource="EMBL-CDS" id="ABK68123"/>
    </conflict>
</comment>
<dbReference type="EC" id="2.7.7.6" evidence="1"/>
<dbReference type="EMBL" id="CP000479">
    <property type="protein sequence ID" value="ABK68123.1"/>
    <property type="status" value="ALT_INIT"/>
    <property type="molecule type" value="Genomic_DNA"/>
</dbReference>
<dbReference type="SMR" id="A0QL49"/>
<dbReference type="KEGG" id="mav:MAV_4503"/>
<dbReference type="HOGENOM" id="CLU_000524_4_3_11"/>
<dbReference type="Proteomes" id="UP000001574">
    <property type="component" value="Chromosome"/>
</dbReference>
<dbReference type="GO" id="GO:0000428">
    <property type="term" value="C:DNA-directed RNA polymerase complex"/>
    <property type="evidence" value="ECO:0007669"/>
    <property type="project" value="UniProtKB-KW"/>
</dbReference>
<dbReference type="GO" id="GO:0003677">
    <property type="term" value="F:DNA binding"/>
    <property type="evidence" value="ECO:0007669"/>
    <property type="project" value="UniProtKB-UniRule"/>
</dbReference>
<dbReference type="GO" id="GO:0003899">
    <property type="term" value="F:DNA-directed RNA polymerase activity"/>
    <property type="evidence" value="ECO:0007669"/>
    <property type="project" value="UniProtKB-UniRule"/>
</dbReference>
<dbReference type="GO" id="GO:0032549">
    <property type="term" value="F:ribonucleoside binding"/>
    <property type="evidence" value="ECO:0007669"/>
    <property type="project" value="InterPro"/>
</dbReference>
<dbReference type="GO" id="GO:0006351">
    <property type="term" value="P:DNA-templated transcription"/>
    <property type="evidence" value="ECO:0007669"/>
    <property type="project" value="UniProtKB-UniRule"/>
</dbReference>
<dbReference type="CDD" id="cd00653">
    <property type="entry name" value="RNA_pol_B_RPB2"/>
    <property type="match status" value="1"/>
</dbReference>
<dbReference type="FunFam" id="2.40.50.150:FF:000001">
    <property type="entry name" value="DNA-directed RNA polymerase subunit beta"/>
    <property type="match status" value="1"/>
</dbReference>
<dbReference type="FunFam" id="3.90.1800.10:FF:000005">
    <property type="entry name" value="DNA-directed RNA polymerase subunit beta"/>
    <property type="match status" value="1"/>
</dbReference>
<dbReference type="Gene3D" id="2.40.50.100">
    <property type="match status" value="1"/>
</dbReference>
<dbReference type="Gene3D" id="2.40.50.150">
    <property type="match status" value="1"/>
</dbReference>
<dbReference type="Gene3D" id="3.90.1100.10">
    <property type="match status" value="1"/>
</dbReference>
<dbReference type="Gene3D" id="2.30.150.10">
    <property type="entry name" value="DNA-directed RNA polymerase, beta subunit, external 1 domain"/>
    <property type="match status" value="1"/>
</dbReference>
<dbReference type="Gene3D" id="2.40.270.10">
    <property type="entry name" value="DNA-directed RNA polymerase, subunit 2, domain 6"/>
    <property type="match status" value="1"/>
</dbReference>
<dbReference type="Gene3D" id="3.90.1800.10">
    <property type="entry name" value="RNA polymerase alpha subunit dimerisation domain"/>
    <property type="match status" value="1"/>
</dbReference>
<dbReference type="Gene3D" id="3.90.1110.10">
    <property type="entry name" value="RNA polymerase Rpb2, domain 2"/>
    <property type="match status" value="1"/>
</dbReference>
<dbReference type="HAMAP" id="MF_01321">
    <property type="entry name" value="RNApol_bact_RpoB"/>
    <property type="match status" value="1"/>
</dbReference>
<dbReference type="InterPro" id="IPR042107">
    <property type="entry name" value="DNA-dir_RNA_pol_bsu_ext_1_sf"/>
</dbReference>
<dbReference type="InterPro" id="IPR019462">
    <property type="entry name" value="DNA-dir_RNA_pol_bsu_external_1"/>
</dbReference>
<dbReference type="InterPro" id="IPR015712">
    <property type="entry name" value="DNA-dir_RNA_pol_su2"/>
</dbReference>
<dbReference type="InterPro" id="IPR007120">
    <property type="entry name" value="DNA-dir_RNAP_su2_dom"/>
</dbReference>
<dbReference type="InterPro" id="IPR037033">
    <property type="entry name" value="DNA-dir_RNAP_su2_hyb_sf"/>
</dbReference>
<dbReference type="InterPro" id="IPR010243">
    <property type="entry name" value="RNA_pol_bsu_bac"/>
</dbReference>
<dbReference type="InterPro" id="IPR007121">
    <property type="entry name" value="RNA_pol_bsu_CS"/>
</dbReference>
<dbReference type="InterPro" id="IPR007644">
    <property type="entry name" value="RNA_pol_bsu_protrusion"/>
</dbReference>
<dbReference type="InterPro" id="IPR007642">
    <property type="entry name" value="RNA_pol_Rpb2_2"/>
</dbReference>
<dbReference type="InterPro" id="IPR037034">
    <property type="entry name" value="RNA_pol_Rpb2_2_sf"/>
</dbReference>
<dbReference type="InterPro" id="IPR007645">
    <property type="entry name" value="RNA_pol_Rpb2_3"/>
</dbReference>
<dbReference type="InterPro" id="IPR007641">
    <property type="entry name" value="RNA_pol_Rpb2_7"/>
</dbReference>
<dbReference type="InterPro" id="IPR014724">
    <property type="entry name" value="RNA_pol_RPB2_OB-fold"/>
</dbReference>
<dbReference type="NCBIfam" id="NF001616">
    <property type="entry name" value="PRK00405.1"/>
    <property type="match status" value="1"/>
</dbReference>
<dbReference type="NCBIfam" id="TIGR02013">
    <property type="entry name" value="rpoB"/>
    <property type="match status" value="1"/>
</dbReference>
<dbReference type="PANTHER" id="PTHR20856">
    <property type="entry name" value="DNA-DIRECTED RNA POLYMERASE I SUBUNIT 2"/>
    <property type="match status" value="1"/>
</dbReference>
<dbReference type="Pfam" id="PF04563">
    <property type="entry name" value="RNA_pol_Rpb2_1"/>
    <property type="match status" value="1"/>
</dbReference>
<dbReference type="Pfam" id="PF04561">
    <property type="entry name" value="RNA_pol_Rpb2_2"/>
    <property type="match status" value="1"/>
</dbReference>
<dbReference type="Pfam" id="PF04565">
    <property type="entry name" value="RNA_pol_Rpb2_3"/>
    <property type="match status" value="1"/>
</dbReference>
<dbReference type="Pfam" id="PF10385">
    <property type="entry name" value="RNA_pol_Rpb2_45"/>
    <property type="match status" value="1"/>
</dbReference>
<dbReference type="Pfam" id="PF00562">
    <property type="entry name" value="RNA_pol_Rpb2_6"/>
    <property type="match status" value="1"/>
</dbReference>
<dbReference type="Pfam" id="PF04560">
    <property type="entry name" value="RNA_pol_Rpb2_7"/>
    <property type="match status" value="1"/>
</dbReference>
<dbReference type="SUPFAM" id="SSF64484">
    <property type="entry name" value="beta and beta-prime subunits of DNA dependent RNA-polymerase"/>
    <property type="match status" value="1"/>
</dbReference>
<dbReference type="PROSITE" id="PS01166">
    <property type="entry name" value="RNA_POL_BETA"/>
    <property type="match status" value="1"/>
</dbReference>
<sequence>MLEGCILADFRQSKTDRPQSSSNGSSSLNGSVPGAPNRVSFAKLREPLEVPGLLDVQIDSFEWLIGAPRWREAAIARGDAEPKGGLEEVLDELSPIEDFSGSMSLSFSDPRFDEVKAPVDECKDKDMTYAAPLFVTAEFINNNTGEIKSQTVFMGDFPMMTEKGTFIINGTERVVVSQLVRSPGVYFDETIDKSTEKTLHSVKVIPSRGAWLEFDVDKRDTVGVRIDRKRRQPVTVLLKALGWTNEQITERFGFSEIMMSTLEKDNTAGTDEALLDIYRKLRPGEPPTKESAQTLLENLFFKEKRYDLARVGRYKVNKKLGLHAGEPITSSTLTEEDVVATIEYLVRLHEGQPTMTVPGGIEVPVETDDIDHFGNRRLRTVGELIQNQIRVGMSRMERVVRERMTTQDVEAITPQTLINIRPVVAAIKEFFGTSQLSQFMDQNNPLSGLTHKRRLSALGPGGLSRERAGLEVRDVHPSHYGRMCPIETPEGPNIGLIGSLSVYARVNPFGFIETPYRKVVDGVVTDEIHYLTADEEDRHVVAQANSPIDDKGRFAEARVLVRRKAGEVEYVPSSEVDYMDVSPRQMVSVATAMIPFLEHDDANRALMGANMQRQAVPLVRSEAPLVGTGMELRAAIDAGDVVVAEKSGVIEEVSADYITVMADDGTRHTYRMRKFERSNHGTCANQSPIVDAGDRVEAGQVIADGPCTENGEMALGKNLLVAIMPWEGHNYEDAIILSNRLVEEDVLTSIHIEEHEIDARDTKLGAEEITRDIPNVSDEVLADLDERGIVRIGAEVRDGDILVGKVTPKGETELTPEERLLRAIFGEKAREVRDTSLKVPHGESGKVIGIRVFSREDDDELPAGVNELVRVYVAQKRKISDGDKLAGRHGNKGVIGKILPQEDMPFLPDGTPVDIILNTHGVPRRMNIGQILETHLGWVAKSGWNIDGNPEWAVNLPEELRHAQPNQIVSTPVFDGAKEEELAGMLSCTLPNRDGEVMVDGDGKAVLFDGRSGEPFPYPVTVGYMYIMKLHHLVDDKIHARSTGPYSMITQQPLGGKAQFGGQRFGEMECWAMQAYGAAYTLQELLTIKSDDTVGRVKVYEAIVKGENIPEPGIPESFKVLLKELQSLCLNVEVLSSDGAAIELREGEDEDLERAAANLGINLSRNESASVEDLA</sequence>
<evidence type="ECO:0000255" key="1">
    <source>
        <dbReference type="HAMAP-Rule" id="MF_01321"/>
    </source>
</evidence>
<evidence type="ECO:0000256" key="2">
    <source>
        <dbReference type="SAM" id="MobiDB-lite"/>
    </source>
</evidence>
<evidence type="ECO:0000305" key="3"/>
<reference key="1">
    <citation type="submission" date="2006-10" db="EMBL/GenBank/DDBJ databases">
        <authorList>
            <person name="Fleischmann R.D."/>
            <person name="Dodson R.J."/>
            <person name="Haft D.H."/>
            <person name="Merkel J.S."/>
            <person name="Nelson W.C."/>
            <person name="Fraser C.M."/>
        </authorList>
    </citation>
    <scope>NUCLEOTIDE SEQUENCE [LARGE SCALE GENOMIC DNA]</scope>
    <source>
        <strain>104</strain>
    </source>
</reference>
<name>RPOB_MYCA1</name>
<feature type="chain" id="PRO_0000300348" description="DNA-directed RNA polymerase subunit beta">
    <location>
        <begin position="1"/>
        <end position="1175"/>
    </location>
</feature>
<feature type="region of interest" description="Disordered" evidence="2">
    <location>
        <begin position="12"/>
        <end position="33"/>
    </location>
</feature>
<feature type="compositionally biased region" description="Low complexity" evidence="2">
    <location>
        <begin position="20"/>
        <end position="31"/>
    </location>
</feature>